<protein>
    <recommendedName>
        <fullName evidence="9">Synemin</fullName>
    </recommendedName>
    <alternativeName>
        <fullName evidence="2">Desmuslin</fullName>
    </alternativeName>
</protein>
<evidence type="ECO:0000250" key="1"/>
<evidence type="ECO:0000250" key="2">
    <source>
        <dbReference type="UniProtKB" id="O15061"/>
    </source>
</evidence>
<evidence type="ECO:0000255" key="3"/>
<evidence type="ECO:0000255" key="4">
    <source>
        <dbReference type="PROSITE-ProRule" id="PRU01188"/>
    </source>
</evidence>
<evidence type="ECO:0000256" key="5">
    <source>
        <dbReference type="SAM" id="MobiDB-lite"/>
    </source>
</evidence>
<evidence type="ECO:0000269" key="6">
    <source>
    </source>
</evidence>
<evidence type="ECO:0000269" key="7">
    <source>
    </source>
</evidence>
<evidence type="ECO:0000269" key="8">
    <source>
    </source>
</evidence>
<evidence type="ECO:0000303" key="9">
    <source>
    </source>
</evidence>
<evidence type="ECO:0000303" key="10">
    <source>
    </source>
</evidence>
<evidence type="ECO:0000305" key="11"/>
<evidence type="ECO:0000312" key="12">
    <source>
        <dbReference type="EMBL" id="BAD32215.1"/>
    </source>
</evidence>
<evidence type="ECO:0000312" key="13">
    <source>
        <dbReference type="EMBL" id="BAE25250.1"/>
    </source>
</evidence>
<evidence type="ECO:0000312" key="14">
    <source>
        <dbReference type="EMBL" id="CAE30277.1"/>
    </source>
</evidence>
<evidence type="ECO:0000312" key="15">
    <source>
        <dbReference type="MGI" id="MGI:2661187"/>
    </source>
</evidence>
<evidence type="ECO:0007744" key="16">
    <source>
    </source>
</evidence>
<evidence type="ECO:0007744" key="17">
    <source>
    </source>
</evidence>
<accession>Q70IV5</accession>
<accession>Q3UPZ4</accession>
<accession>Q6A081</accession>
<accession>Q70IV3</accession>
<accession>Q70IV4</accession>
<keyword id="KW-0025">Alternative splicing</keyword>
<keyword id="KW-0965">Cell junction</keyword>
<keyword id="KW-0175">Coiled coil</keyword>
<keyword id="KW-0963">Cytoplasm</keyword>
<keyword id="KW-0206">Cytoskeleton</keyword>
<keyword id="KW-0403">Intermediate filament</keyword>
<keyword id="KW-0488">Methylation</keyword>
<keyword id="KW-0597">Phosphoprotein</keyword>
<keyword id="KW-1185">Reference proteome</keyword>
<reference evidence="11 14" key="1">
    <citation type="journal article" date="2004" name="Exp. Cell Res.">
        <title>The mouse synemin gene encodes three intermediate filament proteins generated by alternative exon usage and different open reading frames.</title>
        <authorList>
            <person name="Xue Z."/>
            <person name="Cheraud Y."/>
            <person name="Brocheriou V."/>
            <person name="Izmiryan A."/>
            <person name="Titeux M."/>
            <person name="Paulin D."/>
            <person name="Li Z."/>
        </authorList>
    </citation>
    <scope>NUCLEOTIDE SEQUENCE [MRNA] (ISOFORMS 1; 2 AND 3)</scope>
    <scope>FUNCTION</scope>
    <scope>TISSUE SPECIFICITY</scope>
    <source>
        <strain evidence="14">C57BL/6J</strain>
        <tissue evidence="6">Skeletal muscle</tissue>
    </source>
</reference>
<reference evidence="11 13" key="2">
    <citation type="journal article" date="2005" name="Science">
        <title>The transcriptional landscape of the mammalian genome.</title>
        <authorList>
            <person name="Carninci P."/>
            <person name="Kasukawa T."/>
            <person name="Katayama S."/>
            <person name="Gough J."/>
            <person name="Frith M.C."/>
            <person name="Maeda N."/>
            <person name="Oyama R."/>
            <person name="Ravasi T."/>
            <person name="Lenhard B."/>
            <person name="Wells C."/>
            <person name="Kodzius R."/>
            <person name="Shimokawa K."/>
            <person name="Bajic V.B."/>
            <person name="Brenner S.E."/>
            <person name="Batalov S."/>
            <person name="Forrest A.R."/>
            <person name="Zavolan M."/>
            <person name="Davis M.J."/>
            <person name="Wilming L.G."/>
            <person name="Aidinis V."/>
            <person name="Allen J.E."/>
            <person name="Ambesi-Impiombato A."/>
            <person name="Apweiler R."/>
            <person name="Aturaliya R.N."/>
            <person name="Bailey T.L."/>
            <person name="Bansal M."/>
            <person name="Baxter L."/>
            <person name="Beisel K.W."/>
            <person name="Bersano T."/>
            <person name="Bono H."/>
            <person name="Chalk A.M."/>
            <person name="Chiu K.P."/>
            <person name="Choudhary V."/>
            <person name="Christoffels A."/>
            <person name="Clutterbuck D.R."/>
            <person name="Crowe M.L."/>
            <person name="Dalla E."/>
            <person name="Dalrymple B.P."/>
            <person name="de Bono B."/>
            <person name="Della Gatta G."/>
            <person name="di Bernardo D."/>
            <person name="Down T."/>
            <person name="Engstrom P."/>
            <person name="Fagiolini M."/>
            <person name="Faulkner G."/>
            <person name="Fletcher C.F."/>
            <person name="Fukushima T."/>
            <person name="Furuno M."/>
            <person name="Futaki S."/>
            <person name="Gariboldi M."/>
            <person name="Georgii-Hemming P."/>
            <person name="Gingeras T.R."/>
            <person name="Gojobori T."/>
            <person name="Green R.E."/>
            <person name="Gustincich S."/>
            <person name="Harbers M."/>
            <person name="Hayashi Y."/>
            <person name="Hensch T.K."/>
            <person name="Hirokawa N."/>
            <person name="Hill D."/>
            <person name="Huminiecki L."/>
            <person name="Iacono M."/>
            <person name="Ikeo K."/>
            <person name="Iwama A."/>
            <person name="Ishikawa T."/>
            <person name="Jakt M."/>
            <person name="Kanapin A."/>
            <person name="Katoh M."/>
            <person name="Kawasawa Y."/>
            <person name="Kelso J."/>
            <person name="Kitamura H."/>
            <person name="Kitano H."/>
            <person name="Kollias G."/>
            <person name="Krishnan S.P."/>
            <person name="Kruger A."/>
            <person name="Kummerfeld S.K."/>
            <person name="Kurochkin I.V."/>
            <person name="Lareau L.F."/>
            <person name="Lazarevic D."/>
            <person name="Lipovich L."/>
            <person name="Liu J."/>
            <person name="Liuni S."/>
            <person name="McWilliam S."/>
            <person name="Madan Babu M."/>
            <person name="Madera M."/>
            <person name="Marchionni L."/>
            <person name="Matsuda H."/>
            <person name="Matsuzawa S."/>
            <person name="Miki H."/>
            <person name="Mignone F."/>
            <person name="Miyake S."/>
            <person name="Morris K."/>
            <person name="Mottagui-Tabar S."/>
            <person name="Mulder N."/>
            <person name="Nakano N."/>
            <person name="Nakauchi H."/>
            <person name="Ng P."/>
            <person name="Nilsson R."/>
            <person name="Nishiguchi S."/>
            <person name="Nishikawa S."/>
            <person name="Nori F."/>
            <person name="Ohara O."/>
            <person name="Okazaki Y."/>
            <person name="Orlando V."/>
            <person name="Pang K.C."/>
            <person name="Pavan W.J."/>
            <person name="Pavesi G."/>
            <person name="Pesole G."/>
            <person name="Petrovsky N."/>
            <person name="Piazza S."/>
            <person name="Reed J."/>
            <person name="Reid J.F."/>
            <person name="Ring B.Z."/>
            <person name="Ringwald M."/>
            <person name="Rost B."/>
            <person name="Ruan Y."/>
            <person name="Salzberg S.L."/>
            <person name="Sandelin A."/>
            <person name="Schneider C."/>
            <person name="Schoenbach C."/>
            <person name="Sekiguchi K."/>
            <person name="Semple C.A."/>
            <person name="Seno S."/>
            <person name="Sessa L."/>
            <person name="Sheng Y."/>
            <person name="Shibata Y."/>
            <person name="Shimada H."/>
            <person name="Shimada K."/>
            <person name="Silva D."/>
            <person name="Sinclair B."/>
            <person name="Sperling S."/>
            <person name="Stupka E."/>
            <person name="Sugiura K."/>
            <person name="Sultana R."/>
            <person name="Takenaka Y."/>
            <person name="Taki K."/>
            <person name="Tammoja K."/>
            <person name="Tan S.L."/>
            <person name="Tang S."/>
            <person name="Taylor M.S."/>
            <person name="Tegner J."/>
            <person name="Teichmann S.A."/>
            <person name="Ueda H.R."/>
            <person name="van Nimwegen E."/>
            <person name="Verardo R."/>
            <person name="Wei C.L."/>
            <person name="Yagi K."/>
            <person name="Yamanishi H."/>
            <person name="Zabarovsky E."/>
            <person name="Zhu S."/>
            <person name="Zimmer A."/>
            <person name="Hide W."/>
            <person name="Bult C."/>
            <person name="Grimmond S.M."/>
            <person name="Teasdale R.D."/>
            <person name="Liu E.T."/>
            <person name="Brusic V."/>
            <person name="Quackenbush J."/>
            <person name="Wahlestedt C."/>
            <person name="Mattick J.S."/>
            <person name="Hume D.A."/>
            <person name="Kai C."/>
            <person name="Sasaki D."/>
            <person name="Tomaru Y."/>
            <person name="Fukuda S."/>
            <person name="Kanamori-Katayama M."/>
            <person name="Suzuki M."/>
            <person name="Aoki J."/>
            <person name="Arakawa T."/>
            <person name="Iida J."/>
            <person name="Imamura K."/>
            <person name="Itoh M."/>
            <person name="Kato T."/>
            <person name="Kawaji H."/>
            <person name="Kawagashira N."/>
            <person name="Kawashima T."/>
            <person name="Kojima M."/>
            <person name="Kondo S."/>
            <person name="Konno H."/>
            <person name="Nakano K."/>
            <person name="Ninomiya N."/>
            <person name="Nishio T."/>
            <person name="Okada M."/>
            <person name="Plessy C."/>
            <person name="Shibata K."/>
            <person name="Shiraki T."/>
            <person name="Suzuki S."/>
            <person name="Tagami M."/>
            <person name="Waki K."/>
            <person name="Watahiki A."/>
            <person name="Okamura-Oho Y."/>
            <person name="Suzuki H."/>
            <person name="Kawai J."/>
            <person name="Hayashizaki Y."/>
        </authorList>
    </citation>
    <scope>NUCLEOTIDE SEQUENCE [LARGE SCALE MRNA] (ISOFORM 2)</scope>
    <source>
        <strain evidence="13">C57BL/6J</strain>
        <tissue evidence="13">Lung</tissue>
    </source>
</reference>
<reference key="3">
    <citation type="journal article" date="2009" name="PLoS Biol.">
        <title>Lineage-specific biology revealed by a finished genome assembly of the mouse.</title>
        <authorList>
            <person name="Church D.M."/>
            <person name="Goodstadt L."/>
            <person name="Hillier L.W."/>
            <person name="Zody M.C."/>
            <person name="Goldstein S."/>
            <person name="She X."/>
            <person name="Bult C.J."/>
            <person name="Agarwala R."/>
            <person name="Cherry J.L."/>
            <person name="DiCuccio M."/>
            <person name="Hlavina W."/>
            <person name="Kapustin Y."/>
            <person name="Meric P."/>
            <person name="Maglott D."/>
            <person name="Birtle Z."/>
            <person name="Marques A.C."/>
            <person name="Graves T."/>
            <person name="Zhou S."/>
            <person name="Teague B."/>
            <person name="Potamousis K."/>
            <person name="Churas C."/>
            <person name="Place M."/>
            <person name="Herschleb J."/>
            <person name="Runnheim R."/>
            <person name="Forrest D."/>
            <person name="Amos-Landgraf J."/>
            <person name="Schwartz D.C."/>
            <person name="Cheng Z."/>
            <person name="Lindblad-Toh K."/>
            <person name="Eichler E.E."/>
            <person name="Ponting C.P."/>
        </authorList>
    </citation>
    <scope>NUCLEOTIDE SEQUENCE [LARGE SCALE GENOMIC DNA]</scope>
    <source>
        <strain>C57BL/6J</strain>
    </source>
</reference>
<reference evidence="11 12" key="4">
    <citation type="journal article" date="2004" name="DNA Res.">
        <title>Prediction of the coding sequences of mouse homologues of KIAA gene: IV. The complete nucleotide sequences of 500 mouse KIAA-homologous cDNAs identified by screening of terminal sequences of cDNA clones randomly sampled from size-fractionated libraries.</title>
        <authorList>
            <person name="Okazaki N."/>
            <person name="Kikuno R."/>
            <person name="Ohara R."/>
            <person name="Inamoto S."/>
            <person name="Koseki H."/>
            <person name="Hiraoka S."/>
            <person name="Saga Y."/>
            <person name="Seino S."/>
            <person name="Nishimura M."/>
            <person name="Kaisho T."/>
            <person name="Hoshino K."/>
            <person name="Kitamura H."/>
            <person name="Nagase T."/>
            <person name="Ohara O."/>
            <person name="Koga H."/>
        </authorList>
    </citation>
    <scope>NUCLEOTIDE SEQUENCE [LARGE SCALE MRNA] OF 270-1560 (ISOFORM 1)</scope>
    <source>
        <tissue evidence="12">Embryonic intestine</tissue>
    </source>
</reference>
<reference evidence="11" key="5">
    <citation type="journal article" date="2007" name="J. Cell Sci.">
        <title>Synemin is expressed in reactive astrocytes in neurotrauma and interacts differentially with vimentin and GFAP intermediate filament networks.</title>
        <authorList>
            <person name="Jing R."/>
            <person name="Wilhelmsson U."/>
            <person name="Goodwill W."/>
            <person name="Li L."/>
            <person name="Pan Y."/>
            <person name="Pekny M."/>
            <person name="Skalli O."/>
        </authorList>
    </citation>
    <scope>INTERACTION WITH GFAP AND VIM</scope>
    <scope>SUBCELLULAR LOCATION</scope>
    <scope>INDUCTION</scope>
</reference>
<reference evidence="11" key="6">
    <citation type="journal article" date="2009" name="Exp. Cell Res.">
        <title>Synemin isoforms during mouse development: multiplicity of partners in vascular and neuronal systems.</title>
        <authorList>
            <person name="Izmiryan A."/>
            <person name="Franco C.A."/>
            <person name="Paulin D."/>
            <person name="Li Z."/>
            <person name="Xue Z."/>
        </authorList>
    </citation>
    <scope>DEVELOPMENTAL STAGE</scope>
</reference>
<reference key="7">
    <citation type="journal article" date="2010" name="Cell">
        <title>A tissue-specific atlas of mouse protein phosphorylation and expression.</title>
        <authorList>
            <person name="Huttlin E.L."/>
            <person name="Jedrychowski M.P."/>
            <person name="Elias J.E."/>
            <person name="Goswami T."/>
            <person name="Rad R."/>
            <person name="Beausoleil S.A."/>
            <person name="Villen J."/>
            <person name="Haas W."/>
            <person name="Sowa M.E."/>
            <person name="Gygi S.P."/>
        </authorList>
    </citation>
    <scope>PHOSPHORYLATION [LARGE SCALE ANALYSIS] AT SER-778; SER-780; SER-1049; SER-1077 AND SER-1087</scope>
    <scope>IDENTIFICATION BY MASS SPECTROMETRY [LARGE SCALE ANALYSIS]</scope>
    <source>
        <tissue>Brain</tissue>
        <tissue>Brown adipose tissue</tissue>
        <tissue>Kidney</tissue>
        <tissue>Lung</tissue>
        <tissue>Pancreas</tissue>
        <tissue>Testis</tissue>
    </source>
</reference>
<reference key="8">
    <citation type="journal article" date="2014" name="Mol. Cell. Proteomics">
        <title>Immunoaffinity enrichment and mass spectrometry analysis of protein methylation.</title>
        <authorList>
            <person name="Guo A."/>
            <person name="Gu H."/>
            <person name="Zhou J."/>
            <person name="Mulhern D."/>
            <person name="Wang Y."/>
            <person name="Lee K.A."/>
            <person name="Yang V."/>
            <person name="Aguiar M."/>
            <person name="Kornhauser J."/>
            <person name="Jia X."/>
            <person name="Ren J."/>
            <person name="Beausoleil S.A."/>
            <person name="Silva J.C."/>
            <person name="Vemulapalli V."/>
            <person name="Bedford M.T."/>
            <person name="Comb M.J."/>
        </authorList>
    </citation>
    <scope>METHYLATION [LARGE SCALE ANALYSIS] AT ARG-1481</scope>
    <scope>IDENTIFICATION BY MASS SPECTROMETRY [LARGE SCALE ANALYSIS]</scope>
    <source>
        <tissue>Embryo</tissue>
    </source>
</reference>
<dbReference type="EMBL" id="AJ579700">
    <property type="protein sequence ID" value="CAE30277.1"/>
    <property type="molecule type" value="mRNA"/>
</dbReference>
<dbReference type="EMBL" id="AJ579701">
    <property type="protein sequence ID" value="CAE30278.1"/>
    <property type="molecule type" value="mRNA"/>
</dbReference>
<dbReference type="EMBL" id="AJ579702">
    <property type="protein sequence ID" value="CAE30279.1"/>
    <property type="molecule type" value="mRNA"/>
</dbReference>
<dbReference type="EMBL" id="AK143019">
    <property type="protein sequence ID" value="BAE25250.1"/>
    <property type="molecule type" value="mRNA"/>
</dbReference>
<dbReference type="EMBL" id="AC158296">
    <property type="status" value="NOT_ANNOTATED_CDS"/>
    <property type="molecule type" value="Genomic_DNA"/>
</dbReference>
<dbReference type="EMBL" id="AK172937">
    <property type="protein sequence ID" value="BAD32215.1"/>
    <property type="molecule type" value="mRNA"/>
</dbReference>
<dbReference type="CCDS" id="CCDS39982.1">
    <molecule id="Q70IV5-1"/>
</dbReference>
<dbReference type="CCDS" id="CCDS39983.1">
    <molecule id="Q70IV5-2"/>
</dbReference>
<dbReference type="CCDS" id="CCDS85316.1">
    <molecule id="Q70IV5-3"/>
</dbReference>
<dbReference type="RefSeq" id="NP_899135.3">
    <property type="nucleotide sequence ID" value="NM_183312.3"/>
</dbReference>
<dbReference type="RefSeq" id="NP_964001.2">
    <molecule id="Q70IV5-1"/>
    <property type="nucleotide sequence ID" value="NM_201639.2"/>
</dbReference>
<dbReference type="RefSeq" id="NP_997546.2">
    <molecule id="Q70IV5-2"/>
    <property type="nucleotide sequence ID" value="NM_207663.3"/>
</dbReference>
<dbReference type="SMR" id="Q70IV5"/>
<dbReference type="BioGRID" id="231405">
    <property type="interactions" value="9"/>
</dbReference>
<dbReference type="FunCoup" id="Q70IV5">
    <property type="interactions" value="202"/>
</dbReference>
<dbReference type="IntAct" id="Q70IV5">
    <property type="interactions" value="3"/>
</dbReference>
<dbReference type="MINT" id="Q70IV5"/>
<dbReference type="STRING" id="10090.ENSMUSP00000073855"/>
<dbReference type="GlyGen" id="Q70IV5">
    <property type="glycosylation" value="3 sites, 1 N-linked glycan (1 site)"/>
</dbReference>
<dbReference type="iPTMnet" id="Q70IV5"/>
<dbReference type="PhosphoSitePlus" id="Q70IV5"/>
<dbReference type="jPOST" id="Q70IV5"/>
<dbReference type="PaxDb" id="10090-ENSMUSP00000073855"/>
<dbReference type="PeptideAtlas" id="Q70IV5"/>
<dbReference type="ProteomicsDB" id="263185">
    <molecule id="Q70IV5-1"/>
</dbReference>
<dbReference type="ProteomicsDB" id="263186">
    <molecule id="Q70IV5-2"/>
</dbReference>
<dbReference type="ProteomicsDB" id="263187">
    <molecule id="Q70IV5-3"/>
</dbReference>
<dbReference type="Pumba" id="Q70IV5"/>
<dbReference type="Antibodypedia" id="29140">
    <property type="antibodies" value="171 antibodies from 19 providers"/>
</dbReference>
<dbReference type="DNASU" id="233335"/>
<dbReference type="Ensembl" id="ENSMUST00000051389.10">
    <molecule id="Q70IV5-2"/>
    <property type="protein sequence ID" value="ENSMUSP00000050987.9"/>
    <property type="gene ID" value="ENSMUSG00000030554.17"/>
</dbReference>
<dbReference type="Ensembl" id="ENSMUST00000074233.12">
    <molecule id="Q70IV5-1"/>
    <property type="protein sequence ID" value="ENSMUSP00000073855.5"/>
    <property type="gene ID" value="ENSMUSG00000030554.17"/>
</dbReference>
<dbReference type="GeneID" id="233335"/>
<dbReference type="KEGG" id="mmu:233335"/>
<dbReference type="UCSC" id="uc009hiv.1">
    <molecule id="Q70IV5-2"/>
    <property type="organism name" value="mouse"/>
</dbReference>
<dbReference type="UCSC" id="uc009hiw.1">
    <molecule id="Q70IV5-1"/>
    <property type="organism name" value="mouse"/>
</dbReference>
<dbReference type="UCSC" id="uc009hix.1">
    <molecule id="Q70IV5-3"/>
    <property type="organism name" value="mouse"/>
</dbReference>
<dbReference type="AGR" id="MGI:2661187"/>
<dbReference type="CTD" id="23336"/>
<dbReference type="MGI" id="MGI:2661187">
    <property type="gene designation" value="Synm"/>
</dbReference>
<dbReference type="VEuPathDB" id="HostDB:ENSMUSG00000030554"/>
<dbReference type="eggNOG" id="ENOG502QTUH">
    <property type="taxonomic scope" value="Eukaryota"/>
</dbReference>
<dbReference type="GeneTree" id="ENSGT00940000159268"/>
<dbReference type="HOGENOM" id="CLU_002793_0_1_1"/>
<dbReference type="InParanoid" id="Q70IV5"/>
<dbReference type="OrthoDB" id="9949055at2759"/>
<dbReference type="PhylomeDB" id="Q70IV5"/>
<dbReference type="BioGRID-ORCS" id="233335">
    <property type="hits" value="3 hits in 77 CRISPR screens"/>
</dbReference>
<dbReference type="ChiTaRS" id="Synm">
    <property type="organism name" value="mouse"/>
</dbReference>
<dbReference type="PRO" id="PR:Q70IV5"/>
<dbReference type="Proteomes" id="UP000000589">
    <property type="component" value="Chromosome 7"/>
</dbReference>
<dbReference type="RNAct" id="Q70IV5">
    <property type="molecule type" value="protein"/>
</dbReference>
<dbReference type="Bgee" id="ENSMUSG00000030554">
    <property type="expression patterns" value="Expressed in triceps brachii and 198 other cell types or tissues"/>
</dbReference>
<dbReference type="ExpressionAtlas" id="Q70IV5">
    <property type="expression patterns" value="baseline and differential"/>
</dbReference>
<dbReference type="GO" id="GO:0005912">
    <property type="term" value="C:adherens junction"/>
    <property type="evidence" value="ECO:0007669"/>
    <property type="project" value="UniProtKB-SubCell"/>
</dbReference>
<dbReference type="GO" id="GO:0043034">
    <property type="term" value="C:costamere"/>
    <property type="evidence" value="ECO:0000250"/>
    <property type="project" value="UniProtKB"/>
</dbReference>
<dbReference type="GO" id="GO:0005882">
    <property type="term" value="C:intermediate filament"/>
    <property type="evidence" value="ECO:0000250"/>
    <property type="project" value="UniProtKB"/>
</dbReference>
<dbReference type="GO" id="GO:0016020">
    <property type="term" value="C:membrane"/>
    <property type="evidence" value="ECO:0000314"/>
    <property type="project" value="MGI"/>
</dbReference>
<dbReference type="GO" id="GO:0060053">
    <property type="term" value="C:neurofilament cytoskeleton"/>
    <property type="evidence" value="ECO:0000314"/>
    <property type="project" value="MGI"/>
</dbReference>
<dbReference type="GO" id="GO:0042383">
    <property type="term" value="C:sarcolemma"/>
    <property type="evidence" value="ECO:0000314"/>
    <property type="project" value="MGI"/>
</dbReference>
<dbReference type="GO" id="GO:0030018">
    <property type="term" value="C:Z disc"/>
    <property type="evidence" value="ECO:0000266"/>
    <property type="project" value="MGI"/>
</dbReference>
<dbReference type="GO" id="GO:0019215">
    <property type="term" value="F:intermediate filament binding"/>
    <property type="evidence" value="ECO:0000314"/>
    <property type="project" value="UniProtKB"/>
</dbReference>
<dbReference type="GO" id="GO:0030674">
    <property type="term" value="F:protein-macromolecule adaptor activity"/>
    <property type="evidence" value="ECO:0000266"/>
    <property type="project" value="MGI"/>
</dbReference>
<dbReference type="GO" id="GO:0005200">
    <property type="term" value="F:structural constituent of cytoskeleton"/>
    <property type="evidence" value="ECO:0000250"/>
    <property type="project" value="UniProtKB"/>
</dbReference>
<dbReference type="GO" id="GO:0008307">
    <property type="term" value="F:structural constituent of muscle"/>
    <property type="evidence" value="ECO:0000250"/>
    <property type="project" value="UniProtKB"/>
</dbReference>
<dbReference type="GO" id="GO:0017166">
    <property type="term" value="F:vinculin binding"/>
    <property type="evidence" value="ECO:0000250"/>
    <property type="project" value="UniProtKB"/>
</dbReference>
<dbReference type="GO" id="GO:0031443">
    <property type="term" value="P:fast-twitch skeletal muscle fiber contraction"/>
    <property type="evidence" value="ECO:0000315"/>
    <property type="project" value="MGI"/>
</dbReference>
<dbReference type="GO" id="GO:0045104">
    <property type="term" value="P:intermediate filament cytoskeleton organization"/>
    <property type="evidence" value="ECO:0007669"/>
    <property type="project" value="InterPro"/>
</dbReference>
<dbReference type="Gene3D" id="1.20.5.170">
    <property type="match status" value="1"/>
</dbReference>
<dbReference type="Gene3D" id="1.20.5.1160">
    <property type="entry name" value="Vasodilator-stimulated phosphoprotein"/>
    <property type="match status" value="1"/>
</dbReference>
<dbReference type="InterPro" id="IPR018039">
    <property type="entry name" value="IF_conserved"/>
</dbReference>
<dbReference type="InterPro" id="IPR039008">
    <property type="entry name" value="IF_rod_dom"/>
</dbReference>
<dbReference type="InterPro" id="IPR030634">
    <property type="entry name" value="SYNM"/>
</dbReference>
<dbReference type="PANTHER" id="PTHR47136">
    <property type="entry name" value="SYNEMIN"/>
    <property type="match status" value="1"/>
</dbReference>
<dbReference type="PANTHER" id="PTHR47136:SF1">
    <property type="entry name" value="SYNEMIN"/>
    <property type="match status" value="1"/>
</dbReference>
<dbReference type="Pfam" id="PF00038">
    <property type="entry name" value="Filament"/>
    <property type="match status" value="1"/>
</dbReference>
<dbReference type="SMART" id="SM01391">
    <property type="entry name" value="Filament"/>
    <property type="match status" value="1"/>
</dbReference>
<dbReference type="SUPFAM" id="SSF64593">
    <property type="entry name" value="Intermediate filament protein, coiled coil region"/>
    <property type="match status" value="2"/>
</dbReference>
<dbReference type="PROSITE" id="PS00226">
    <property type="entry name" value="IF_ROD_1"/>
    <property type="match status" value="1"/>
</dbReference>
<dbReference type="PROSITE" id="PS51842">
    <property type="entry name" value="IF_ROD_2"/>
    <property type="match status" value="1"/>
</dbReference>
<name>SYNEM_MOUSE</name>
<feature type="chain" id="PRO_0000364438" description="Synemin">
    <location>
        <begin position="1"/>
        <end position="1561"/>
    </location>
</feature>
<feature type="domain" description="IF rod" evidence="4">
    <location>
        <begin position="11"/>
        <end position="322"/>
    </location>
</feature>
<feature type="region of interest" description="Head" evidence="3">
    <location>
        <begin position="1"/>
        <end position="10"/>
    </location>
</feature>
<feature type="region of interest" description="Interaction with DMD and UTRN" evidence="2">
    <location>
        <begin position="11"/>
        <end position="320"/>
    </location>
</feature>
<feature type="region of interest" description="Coil 1A" evidence="3">
    <location>
        <begin position="11"/>
        <end position="49"/>
    </location>
</feature>
<feature type="region of interest" description="Linker 1" evidence="3">
    <location>
        <begin position="50"/>
        <end position="58"/>
    </location>
</feature>
<feature type="region of interest" description="Coil 1B" evidence="3">
    <location>
        <begin position="59"/>
        <end position="163"/>
    </location>
</feature>
<feature type="region of interest" description="Linker 12" evidence="3">
    <location>
        <begin position="164"/>
        <end position="186"/>
    </location>
</feature>
<feature type="region of interest" description="Coil 2" evidence="3">
    <location>
        <begin position="187"/>
        <end position="300"/>
    </location>
</feature>
<feature type="region of interest" description="Tail" evidence="3">
    <location>
        <begin position="301"/>
        <end position="1561"/>
    </location>
</feature>
<feature type="region of interest" description="Disordered" evidence="5">
    <location>
        <begin position="371"/>
        <end position="421"/>
    </location>
</feature>
<feature type="region of interest" description="Disordered" evidence="5">
    <location>
        <begin position="549"/>
        <end position="574"/>
    </location>
</feature>
<feature type="region of interest" description="Disordered" evidence="5">
    <location>
        <begin position="591"/>
        <end position="637"/>
    </location>
</feature>
<feature type="region of interest" description="Disordered" evidence="5">
    <location>
        <begin position="1033"/>
        <end position="1061"/>
    </location>
</feature>
<feature type="region of interest" description="Disordered" evidence="5">
    <location>
        <begin position="1075"/>
        <end position="1099"/>
    </location>
</feature>
<feature type="region of interest" description="Interaction with TLN1 and VCL" evidence="2">
    <location>
        <begin position="1152"/>
        <end position="1453"/>
    </location>
</feature>
<feature type="region of interest" description="Disordered" evidence="5">
    <location>
        <begin position="1212"/>
        <end position="1231"/>
    </location>
</feature>
<feature type="region of interest" description="Interaction with DMD and UTRN" evidence="2">
    <location>
        <begin position="1242"/>
        <end position="1557"/>
    </location>
</feature>
<feature type="region of interest" description="Disordered" evidence="5">
    <location>
        <begin position="1491"/>
        <end position="1519"/>
    </location>
</feature>
<feature type="compositionally biased region" description="Polar residues" evidence="5">
    <location>
        <begin position="371"/>
        <end position="390"/>
    </location>
</feature>
<feature type="compositionally biased region" description="Polar residues" evidence="5">
    <location>
        <begin position="401"/>
        <end position="421"/>
    </location>
</feature>
<feature type="compositionally biased region" description="Basic and acidic residues" evidence="5">
    <location>
        <begin position="601"/>
        <end position="624"/>
    </location>
</feature>
<feature type="compositionally biased region" description="Polar residues" evidence="5">
    <location>
        <begin position="625"/>
        <end position="637"/>
    </location>
</feature>
<feature type="compositionally biased region" description="Polar residues" evidence="5">
    <location>
        <begin position="1086"/>
        <end position="1099"/>
    </location>
</feature>
<feature type="compositionally biased region" description="Basic and acidic residues" evidence="5">
    <location>
        <begin position="1222"/>
        <end position="1231"/>
    </location>
</feature>
<feature type="modified residue" description="Phosphothreonine" evidence="2">
    <location>
        <position position="653"/>
    </location>
</feature>
<feature type="modified residue" description="Phosphoserine" evidence="2">
    <location>
        <position position="655"/>
    </location>
</feature>
<feature type="modified residue" description="Phosphoserine" evidence="16">
    <location>
        <position position="778"/>
    </location>
</feature>
<feature type="modified residue" description="Phosphoserine" evidence="16">
    <location>
        <position position="780"/>
    </location>
</feature>
<feature type="modified residue" description="Phosphoserine" evidence="2">
    <location>
        <position position="1044"/>
    </location>
</feature>
<feature type="modified residue" description="Phosphoserine" evidence="16">
    <location>
        <position position="1049"/>
    </location>
</feature>
<feature type="modified residue" description="Phosphoserine" evidence="16">
    <location>
        <position position="1077"/>
    </location>
</feature>
<feature type="modified residue" description="Phosphoserine" evidence="16">
    <location>
        <position position="1087"/>
    </location>
</feature>
<feature type="modified residue" description="Phosphoserine" evidence="2">
    <location>
        <position position="1179"/>
    </location>
</feature>
<feature type="modified residue" description="Phosphoserine" evidence="2">
    <location>
        <position position="1182"/>
    </location>
</feature>
<feature type="modified residue" description="Phosphoserine" evidence="2">
    <location>
        <position position="1425"/>
    </location>
</feature>
<feature type="modified residue" description="Omega-N-methylarginine" evidence="17">
    <location>
        <position position="1481"/>
    </location>
</feature>
<feature type="splice variant" id="VSP_053033" description="In isoform 3." evidence="9">
    <original>EPRNTSYRYTNSVLQRKNEKNLFPRRKTPWAAVNHS</original>
    <variation>DGFERHESDPQLDPRHRVGSGSSRRVSPWWLENCTQ</variation>
    <location>
        <begin position="336"/>
        <end position="371"/>
    </location>
</feature>
<feature type="splice variant" id="VSP_053034" description="In isoform 3." evidence="9">
    <location>
        <begin position="372"/>
        <end position="1561"/>
    </location>
</feature>
<feature type="splice variant" id="VSP_053035" description="In isoform 2." evidence="9 10">
    <location>
        <begin position="1152"/>
        <end position="1453"/>
    </location>
</feature>
<feature type="sequence conflict" description="In Ref. 1; CAE30277/CAE30278/CAE30279." evidence="11" ref="1">
    <original>E</original>
    <variation>K</variation>
    <location>
        <position position="122"/>
    </location>
</feature>
<feature type="sequence conflict" description="In Ref. 1; CAE30277/CAE30278/CAE30279." evidence="11" ref="1">
    <original>A</original>
    <variation>S</variation>
    <location>
        <position position="223"/>
    </location>
</feature>
<feature type="sequence conflict" description="In Ref. 1; CAE30277/CAE30278." evidence="11" ref="1">
    <original>E</original>
    <variation>G</variation>
    <location>
        <position position="577"/>
    </location>
</feature>
<feature type="sequence conflict" description="In Ref. 1; CAE30277/CAE30278." evidence="11" ref="1">
    <original>Y</original>
    <variation>C</variation>
    <location>
        <position position="830"/>
    </location>
</feature>
<feature type="sequence conflict" description="In Ref. 1; CAE30277 and 4; BAD32215." evidence="11" ref="1 4">
    <original>P</original>
    <variation>S</variation>
    <location>
        <position position="835"/>
    </location>
</feature>
<feature type="sequence conflict" description="In Ref. 1; CAE30277/CAE30278." evidence="11" ref="1">
    <original>A</original>
    <variation>T</variation>
    <location>
        <position position="896"/>
    </location>
</feature>
<feature type="sequence conflict" description="In Ref. 1; CAE30277/CAE30278." evidence="11" ref="1">
    <original>A</original>
    <variation>V</variation>
    <location>
        <position position="993"/>
    </location>
</feature>
<feature type="sequence conflict" description="In Ref. 1; CAE30277/CAE30278." evidence="11" ref="1">
    <original>L</original>
    <variation>F</variation>
    <location>
        <position position="1064"/>
    </location>
</feature>
<feature type="sequence conflict" description="In Ref. 1; CAE30277/CAE30278." evidence="11" ref="1">
    <original>E</original>
    <variation>D</variation>
    <location>
        <position position="1072"/>
    </location>
</feature>
<feature type="sequence conflict" description="In Ref. 1; CAE30277/CAE30278." evidence="11" ref="1">
    <original>S</original>
    <variation>F</variation>
    <location>
        <position position="1077"/>
    </location>
</feature>
<feature type="sequence conflict" description="In Ref. 1; CAE30277/CAE30278." evidence="11" ref="1">
    <original>S</original>
    <variation>F</variation>
    <location>
        <position position="1114"/>
    </location>
</feature>
<feature type="sequence conflict" description="In Ref. 1; CAE30277/CAE30278." evidence="11" ref="1">
    <original>S</original>
    <variation>F</variation>
    <location>
        <position position="1123"/>
    </location>
</feature>
<feature type="sequence conflict" description="In Ref. 1; CAE30277/CAE30278." evidence="11" ref="1">
    <original>L</original>
    <variation>I</variation>
    <location>
        <position position="1129"/>
    </location>
</feature>
<feature type="sequence conflict" description="In Ref. 1; CAE30277." evidence="11" ref="1">
    <original>R</original>
    <variation>P</variation>
    <location>
        <position position="1167"/>
    </location>
</feature>
<feature type="sequence conflict" description="In Ref. 1; CAE30277." evidence="11" ref="1">
    <original>V</original>
    <variation>A</variation>
    <location>
        <position position="1206"/>
    </location>
</feature>
<feature type="sequence conflict" description="In Ref. 1; CAE30277." evidence="11" ref="1">
    <original>T</original>
    <variation>A</variation>
    <location>
        <position position="1241"/>
    </location>
</feature>
<feature type="sequence conflict" description="In Ref. 1; CAE30277." evidence="11" ref="1">
    <original>H</original>
    <variation>Q</variation>
    <location>
        <position position="1348"/>
    </location>
</feature>
<feature type="sequence conflict" description="In Ref. 1; CAE30277/CAE30278." evidence="11" ref="1">
    <original>S</original>
    <variation>F</variation>
    <location>
        <position position="1499"/>
    </location>
</feature>
<feature type="sequence conflict" description="In Ref. 1; CAE30277/CAE30278." evidence="11" ref="1">
    <location>
        <position position="1556"/>
    </location>
</feature>
<comment type="function">
    <text evidence="1 6">Type-VI intermediate filament (IF) which plays an important cytoskeletal role within the muscle cell cytoskeleton. It forms heteromeric IFs with desmin and/or vimentin, and via its interaction with cytoskeletal proteins alpha-dystrobrevin, dystrophin, talin-1, utrophin and vinculin, is able to link these heteromeric IFs to adherens-type junctions, such as to the costameres, neuromuscular junctions, and myotendinous junctions within striated muscle cells (By similarity).</text>
</comment>
<comment type="subunit">
    <text evidence="2 7">Interacts with DES, DMD, DTNA, TLN1, UTRN and VCL (By similarity). Isoform 1 and isoform 2 interact with GFAP and VIM.</text>
</comment>
<comment type="interaction">
    <interactant intactId="EBI-9989763">
        <id>Q70IV5</id>
    </interactant>
    <interactant intactId="EBI-9672947">
        <id>A2ASS6</id>
        <label>Ttn</label>
    </interactant>
    <organismsDiffer>false</organismsDiffer>
    <experiments>3</experiments>
</comment>
<comment type="subcellular location">
    <subcellularLocation>
        <location evidence="7">Cytoplasm</location>
        <location evidence="7">Cytoskeleton</location>
    </subcellularLocation>
    <subcellularLocation>
        <location evidence="2">Cell junction</location>
        <location evidence="2">Adherens junction</location>
    </subcellularLocation>
    <text evidence="2 7">There are at least two distinct SYNM subpopulations, one in which SYMN interacts with DES within the Z-lines, and another in which it interacts with both DTNA and DES at the costamere.</text>
</comment>
<comment type="alternative products">
    <event type="alternative splicing"/>
    <isoform>
        <id>Q70IV5-1</id>
        <name evidence="6">1</name>
        <name evidence="6">H</name>
        <sequence type="displayed"/>
    </isoform>
    <isoform>
        <id>Q70IV5-2</id>
        <name evidence="6">2</name>
        <name evidence="6">M</name>
        <sequence type="described" ref="VSP_053035"/>
    </isoform>
    <isoform>
        <id>Q70IV5-3</id>
        <name evidence="6">3</name>
        <name evidence="6">L</name>
        <sequence type="described" ref="VSP_053033 VSP_053034"/>
    </isoform>
</comment>
<comment type="tissue specificity">
    <text evidence="6">Isoform 2 and isoform 3 are detected in adult skeletal muscle, heart and bladder, whereas isoform 1 is only detected in adult bladder (at protein level).</text>
</comment>
<comment type="developmental stage">
    <text evidence="8">At 11.5 dpc, isoform 1 and isoform 2 are widely expressed in the developing nervous and vascular systems and are also found specifically associated with vimentin in endothelial cells. By 15 dpc, isoform 1, isoform 2 and isoform 3, are found coexpressed with neurofilament, peripherin and internexin in the peripheral nervous system (at protein level). In the developing embryo, isoform 2 is detected as early as 5 dpc, whereas isoform 1 is first observed at 9 dpc in the nervous system and mesodermic derivatives. Isoform 3 is observed later in neurons at 15 dpc.</text>
</comment>
<comment type="induction">
    <text evidence="7">Up-regulated in reactive astrocytes following neurotrauma (at protein level).</text>
</comment>
<comment type="similarity">
    <text evidence="4">Belongs to the intermediate filament family.</text>
</comment>
<proteinExistence type="evidence at protein level"/>
<gene>
    <name evidence="15" type="primary">Synm</name>
    <name evidence="15" type="synonym">Dmn</name>
    <name evidence="12" type="synonym">Kiaa0353</name>
</gene>
<sequence length="1561" mass="173209">MLSWRLQTGSEKAELQELNARLYDYVCRVRELERENLLLEEELRSRLSREDRWAEDQALYAEEARSLRQQLDELNWSTALAEGERDALRRELLELQREGVEAGTARSRLDAELGAQRRELEEALGARAALEALLGRLETERRDLDAAHERQVRDLRARAASLTMHFRARATSPAAPPPRLRDVHDSYALLVAESWRESVQLYEDEVRELEQALRRGQESRLQAEDEARLCAQEADALRNQALELEQLRARLEDELLRMREEYGMQAEERQRVIDSLEDEKEALTLAMADRLRDYQELLQVKTGLSLEVATYRALLEGESNPEILIWTENIENVPQEPRNTSYRYTNSVLQRKNEKNLFPRRKTPWAAVNHSSASYSNWPGHLDSQTTTAVGSAARRGLLTSRHSSSATTSGQQKPLEKTISSRANLRPVTPTHGFLRNTDAQMKTLPHRSKVEGTGDTHARRATESVITRESYRGHQGHVAAGAVSSTPSNERTVILGKKLEAQATKEQERDRSGVIRIKPEEKMFDSKEKASEERNLRWEELTKLDRDARKRESRHLRDEAREKEALKERSVKEREVPISLEVSRGSRAEVSTIHLQSPGRKDVSHSGGREAETKETRFRLDTQDTASSLQSDSTTETIAESIVTTILKQFTQSPGAEEEATSFPDTKVTYVDRKEFPGDGKTKTEIVVESKLTDVVDVSDEAGLDYLLSKDVKEVGLKGKSTETMIGEMINLGLKGREGRAKVVNVEIVEEPMSYIGGGKIDFSTPFQVEEVDDVSPSPKGFVEEEDGEGETHMAFSMRPHQTKQPQGTIPHVEEVTEAGDSEGEQSYFVSTPDEYPGGHDREDDGSVYGQIHIEEESTIRYSWQDEIAQGTWRRKMRGDVGGEKPVKVLEVPALSLGGAIGSAHLKEEASGELRAEPTVIEKEIKIPHEFHTSIKGVFSSEPRHQLVEVIGQLEETLPERMKEELSALTRQSQGESGSVSVDVKKVQSAAGGSVTLMAEVNLSQTVDADQLDLEQLSRDEAGEIERAVESVVRESLAKRSSPVPRSPDREDGEEVPAGGILFKRWATRELYSPSGERDDAGQVSPSSDQRVTQGPVSATVEVTSPTGFVQSHVLEDVSQSVRHVKLGPTEMWRTEQVTFGGPTAQVVEVSGDFSEAVSSEGASRSVRHITLGPHQSQVSTEVIFRGSVPTWQETGDTEKPGPVVLSVGADISGSGRMPGSERSHTEKEIRFQGPVSGTAQVGGNFATEESVGSQTFVRSLQLGPKEGFREEIQFIAPIPDKVGWGEEDSEHTKVSLERATSIQRIDIVPQRYLASKQMAPQTLEFRDSEDMVMVEGSAGTIQATHNFTSDREILQNKENTFQRVISGSPPDSVGDTGAEVTANVSRSFRHIQIGPTEEEPSEYFVTGRPVSKTFVLDGSVASPGLVGGADGGSTPCRIALGPKETSFTFQMDLSDTRAIRSWTRDTGSEVEAHGVSHRGGWRIAHSRDERVASTGSGASPGDAHQAPGEKGTEQAGFDKTVQLQRMVDQRSVASDEKKVALLYLDNEEEEEEEGEGWF</sequence>
<organism>
    <name type="scientific">Mus musculus</name>
    <name type="common">Mouse</name>
    <dbReference type="NCBI Taxonomy" id="10090"/>
    <lineage>
        <taxon>Eukaryota</taxon>
        <taxon>Metazoa</taxon>
        <taxon>Chordata</taxon>
        <taxon>Craniata</taxon>
        <taxon>Vertebrata</taxon>
        <taxon>Euteleostomi</taxon>
        <taxon>Mammalia</taxon>
        <taxon>Eutheria</taxon>
        <taxon>Euarchontoglires</taxon>
        <taxon>Glires</taxon>
        <taxon>Rodentia</taxon>
        <taxon>Myomorpha</taxon>
        <taxon>Muroidea</taxon>
        <taxon>Muridae</taxon>
        <taxon>Murinae</taxon>
        <taxon>Mus</taxon>
        <taxon>Mus</taxon>
    </lineage>
</organism>